<name>CNPY4_HUMAN</name>
<proteinExistence type="evidence at protein level"/>
<evidence type="ECO:0000250" key="1"/>
<evidence type="ECO:0000255" key="2"/>
<evidence type="ECO:0000256" key="3">
    <source>
        <dbReference type="SAM" id="MobiDB-lite"/>
    </source>
</evidence>
<evidence type="ECO:0000269" key="4">
    <source>
    </source>
</evidence>
<evidence type="ECO:0000305" key="5"/>
<keyword id="KW-1015">Disulfide bond</keyword>
<keyword id="KW-1267">Proteomics identification</keyword>
<keyword id="KW-1185">Reference proteome</keyword>
<keyword id="KW-0964">Secreted</keyword>
<keyword id="KW-0732">Signal</keyword>
<dbReference type="EMBL" id="AY359100">
    <property type="protein sequence ID" value="AAQ89458.1"/>
    <property type="molecule type" value="mRNA"/>
</dbReference>
<dbReference type="EMBL" id="AK075537">
    <property type="protein sequence ID" value="BAC11680.1"/>
    <property type="molecule type" value="mRNA"/>
</dbReference>
<dbReference type="EMBL" id="CH236956">
    <property type="protein sequence ID" value="EAL23850.1"/>
    <property type="molecule type" value="Genomic_DNA"/>
</dbReference>
<dbReference type="EMBL" id="BC019903">
    <property type="protein sequence ID" value="AAH19903.2"/>
    <property type="molecule type" value="mRNA"/>
</dbReference>
<dbReference type="EMBL" id="BC032339">
    <property type="protein sequence ID" value="AAH32339.1"/>
    <property type="molecule type" value="mRNA"/>
</dbReference>
<dbReference type="CCDS" id="CCDS34701.1"/>
<dbReference type="RefSeq" id="NP_689968.1">
    <property type="nucleotide sequence ID" value="NM_152755.2"/>
</dbReference>
<dbReference type="BioGRID" id="128831">
    <property type="interactions" value="21"/>
</dbReference>
<dbReference type="FunCoup" id="Q8N129">
    <property type="interactions" value="696"/>
</dbReference>
<dbReference type="IntAct" id="Q8N129">
    <property type="interactions" value="19"/>
</dbReference>
<dbReference type="STRING" id="9606.ENSP00000262932"/>
<dbReference type="iPTMnet" id="Q8N129"/>
<dbReference type="PhosphoSitePlus" id="Q8N129"/>
<dbReference type="BioMuta" id="CNPY4"/>
<dbReference type="DMDM" id="74728482"/>
<dbReference type="jPOST" id="Q8N129"/>
<dbReference type="MassIVE" id="Q8N129"/>
<dbReference type="PaxDb" id="9606-ENSP00000262932"/>
<dbReference type="PeptideAtlas" id="Q8N129"/>
<dbReference type="ProteomicsDB" id="71530"/>
<dbReference type="Pumba" id="Q8N129"/>
<dbReference type="Antibodypedia" id="2588">
    <property type="antibodies" value="51 antibodies from 17 providers"/>
</dbReference>
<dbReference type="DNASU" id="245812"/>
<dbReference type="Ensembl" id="ENST00000262932.5">
    <property type="protein sequence ID" value="ENSP00000262932.3"/>
    <property type="gene ID" value="ENSG00000166997.8"/>
</dbReference>
<dbReference type="GeneID" id="245812"/>
<dbReference type="KEGG" id="hsa:245812"/>
<dbReference type="MANE-Select" id="ENST00000262932.5">
    <property type="protein sequence ID" value="ENSP00000262932.3"/>
    <property type="RefSeq nucleotide sequence ID" value="NM_152755.2"/>
    <property type="RefSeq protein sequence ID" value="NP_689968.1"/>
</dbReference>
<dbReference type="UCSC" id="uc003uto.4">
    <property type="organism name" value="human"/>
</dbReference>
<dbReference type="AGR" id="HGNC:28631"/>
<dbReference type="CTD" id="245812"/>
<dbReference type="DisGeNET" id="245812"/>
<dbReference type="GeneCards" id="CNPY4"/>
<dbReference type="HGNC" id="HGNC:28631">
    <property type="gene designation" value="CNPY4"/>
</dbReference>
<dbReference type="HPA" id="ENSG00000166997">
    <property type="expression patterns" value="Low tissue specificity"/>
</dbReference>
<dbReference type="MIM" id="610047">
    <property type="type" value="gene"/>
</dbReference>
<dbReference type="neXtProt" id="NX_Q8N129"/>
<dbReference type="OpenTargets" id="ENSG00000166997"/>
<dbReference type="PharmGKB" id="PA162382618"/>
<dbReference type="VEuPathDB" id="HostDB:ENSG00000166997"/>
<dbReference type="eggNOG" id="KOG4052">
    <property type="taxonomic scope" value="Eukaryota"/>
</dbReference>
<dbReference type="GeneTree" id="ENSGT00390000014072"/>
<dbReference type="HOGENOM" id="CLU_078068_0_1_1"/>
<dbReference type="InParanoid" id="Q8N129"/>
<dbReference type="OMA" id="CKFLTME"/>
<dbReference type="OrthoDB" id="6020060at2759"/>
<dbReference type="PAN-GO" id="Q8N129">
    <property type="GO annotations" value="1 GO annotation based on evolutionary models"/>
</dbReference>
<dbReference type="PhylomeDB" id="Q8N129"/>
<dbReference type="TreeFam" id="TF318951"/>
<dbReference type="PathwayCommons" id="Q8N129"/>
<dbReference type="SignaLink" id="Q8N129"/>
<dbReference type="BioGRID-ORCS" id="245812">
    <property type="hits" value="7 hits in 1152 CRISPR screens"/>
</dbReference>
<dbReference type="ChiTaRS" id="CNPY4">
    <property type="organism name" value="human"/>
</dbReference>
<dbReference type="GenomeRNAi" id="245812"/>
<dbReference type="Pharos" id="Q8N129">
    <property type="development level" value="Tdark"/>
</dbReference>
<dbReference type="PRO" id="PR:Q8N129"/>
<dbReference type="Proteomes" id="UP000005640">
    <property type="component" value="Chromosome 7"/>
</dbReference>
<dbReference type="RNAct" id="Q8N129">
    <property type="molecule type" value="protein"/>
</dbReference>
<dbReference type="Bgee" id="ENSG00000166997">
    <property type="expression patterns" value="Expressed in stromal cell of endometrium and 182 other cell types or tissues"/>
</dbReference>
<dbReference type="ExpressionAtlas" id="Q8N129">
    <property type="expression patterns" value="baseline and differential"/>
</dbReference>
<dbReference type="GO" id="GO:0005576">
    <property type="term" value="C:extracellular region"/>
    <property type="evidence" value="ECO:0007669"/>
    <property type="project" value="UniProtKB-SubCell"/>
</dbReference>
<dbReference type="GO" id="GO:0005102">
    <property type="term" value="F:signaling receptor binding"/>
    <property type="evidence" value="ECO:0000318"/>
    <property type="project" value="GO_Central"/>
</dbReference>
<dbReference type="GO" id="GO:1903078">
    <property type="term" value="P:positive regulation of protein localization to plasma membrane"/>
    <property type="evidence" value="ECO:0000315"/>
    <property type="project" value="UniProtKB"/>
</dbReference>
<dbReference type="InterPro" id="IPR021852">
    <property type="entry name" value="DUF3456"/>
</dbReference>
<dbReference type="PANTHER" id="PTHR15382">
    <property type="entry name" value="CTG4A-RELATED"/>
    <property type="match status" value="1"/>
</dbReference>
<dbReference type="PANTHER" id="PTHR15382:SF3">
    <property type="entry name" value="PROTEIN CANOPY HOMOLOG 4"/>
    <property type="match status" value="1"/>
</dbReference>
<dbReference type="Pfam" id="PF11938">
    <property type="entry name" value="DUF3456"/>
    <property type="match status" value="1"/>
</dbReference>
<comment type="function">
    <text evidence="4">Plays a role in the regulation of the cell surface expression of TLR4.</text>
</comment>
<comment type="subunit">
    <text evidence="1">Interacts with TLR4.</text>
</comment>
<comment type="interaction">
    <interactant intactId="EBI-723824">
        <id>Q8N129</id>
    </interactant>
    <interactant intactId="EBI-3956936">
        <id>Q9BRQ8</id>
        <label>AIFM2</label>
    </interactant>
    <organismsDiffer>false</organismsDiffer>
    <experiments>3</experiments>
</comment>
<comment type="interaction">
    <interactant intactId="EBI-723824">
        <id>Q8N129</id>
    </interactant>
    <interactant intactId="EBI-21895311">
        <id>O15335</id>
        <label>CHAD</label>
    </interactant>
    <organismsDiffer>false</organismsDiffer>
    <experiments>2</experiments>
</comment>
<comment type="subcellular location">
    <subcellularLocation>
        <location evidence="5">Secreted</location>
    </subcellularLocation>
</comment>
<comment type="similarity">
    <text evidence="5">Belongs to the canopy family.</text>
</comment>
<gene>
    <name type="primary">CNPY4</name>
    <name type="ORF">PSEC0237</name>
    <name type="ORF">UNQ1909/PRO4354</name>
</gene>
<protein>
    <recommendedName>
        <fullName>Protein canopy homolog 4</fullName>
    </recommendedName>
</protein>
<feature type="signal peptide" evidence="2">
    <location>
        <begin position="1"/>
        <end position="21"/>
    </location>
</feature>
<feature type="chain" id="PRO_0000314018" description="Protein canopy homolog 4">
    <location>
        <begin position="22"/>
        <end position="248"/>
    </location>
</feature>
<feature type="region of interest" description="Disordered" evidence="3">
    <location>
        <begin position="200"/>
        <end position="248"/>
    </location>
</feature>
<feature type="compositionally biased region" description="Acidic residues" evidence="3">
    <location>
        <begin position="213"/>
        <end position="230"/>
    </location>
</feature>
<feature type="compositionally biased region" description="Basic and acidic residues" evidence="3">
    <location>
        <begin position="231"/>
        <end position="248"/>
    </location>
</feature>
<feature type="disulfide bond" evidence="1">
    <location>
        <begin position="38"/>
        <end position="196"/>
    </location>
</feature>
<feature type="disulfide bond" evidence="1">
    <location>
        <begin position="41"/>
        <end position="184"/>
    </location>
</feature>
<feature type="disulfide bond" evidence="1">
    <location>
        <begin position="94"/>
        <end position="156"/>
    </location>
</feature>
<feature type="sequence variant" id="VAR_062216" description="In dbSNP:rs60551236.">
    <original>G</original>
    <variation>R</variation>
    <location>
        <position position="168"/>
    </location>
</feature>
<sequence length="248" mass="28310">MGPVRLGILLFLFLAVHEAWAGMLKEEDDDTERLPSKCEVCKLLSTELQAELSRTGRSREVLELGQVLDTGKRKRHVPYSVSETRLEEALENLCERILDYSVHAERKGSLRYAKGQSQTMATLKGLVQKGVKVDLGIPLELWDEPSVEVTYLKKQCETMLEEFEDIVGDWYFHHQEQPLQNFLCEGHVLPAAETACLQETWTGKEITDGEEKTEGEEEQEEEEEEEEEEGGDKMTKTGSHPKLDREDL</sequence>
<organism>
    <name type="scientific">Homo sapiens</name>
    <name type="common">Human</name>
    <dbReference type="NCBI Taxonomy" id="9606"/>
    <lineage>
        <taxon>Eukaryota</taxon>
        <taxon>Metazoa</taxon>
        <taxon>Chordata</taxon>
        <taxon>Craniata</taxon>
        <taxon>Vertebrata</taxon>
        <taxon>Euteleostomi</taxon>
        <taxon>Mammalia</taxon>
        <taxon>Eutheria</taxon>
        <taxon>Euarchontoglires</taxon>
        <taxon>Primates</taxon>
        <taxon>Haplorrhini</taxon>
        <taxon>Catarrhini</taxon>
        <taxon>Hominidae</taxon>
        <taxon>Homo</taxon>
    </lineage>
</organism>
<accession>Q8N129</accession>
<accession>Q8WUN9</accession>
<reference key="1">
    <citation type="journal article" date="2003" name="Genome Res.">
        <title>The secreted protein discovery initiative (SPDI), a large-scale effort to identify novel human secreted and transmembrane proteins: a bioinformatics assessment.</title>
        <authorList>
            <person name="Clark H.F."/>
            <person name="Gurney A.L."/>
            <person name="Abaya E."/>
            <person name="Baker K."/>
            <person name="Baldwin D.T."/>
            <person name="Brush J."/>
            <person name="Chen J."/>
            <person name="Chow B."/>
            <person name="Chui C."/>
            <person name="Crowley C."/>
            <person name="Currell B."/>
            <person name="Deuel B."/>
            <person name="Dowd P."/>
            <person name="Eaton D."/>
            <person name="Foster J.S."/>
            <person name="Grimaldi C."/>
            <person name="Gu Q."/>
            <person name="Hass P.E."/>
            <person name="Heldens S."/>
            <person name="Huang A."/>
            <person name="Kim H.S."/>
            <person name="Klimowski L."/>
            <person name="Jin Y."/>
            <person name="Johnson S."/>
            <person name="Lee J."/>
            <person name="Lewis L."/>
            <person name="Liao D."/>
            <person name="Mark M.R."/>
            <person name="Robbie E."/>
            <person name="Sanchez C."/>
            <person name="Schoenfeld J."/>
            <person name="Seshagiri S."/>
            <person name="Simmons L."/>
            <person name="Singh J."/>
            <person name="Smith V."/>
            <person name="Stinson J."/>
            <person name="Vagts A."/>
            <person name="Vandlen R.L."/>
            <person name="Watanabe C."/>
            <person name="Wieand D."/>
            <person name="Woods K."/>
            <person name="Xie M.-H."/>
            <person name="Yansura D.G."/>
            <person name="Yi S."/>
            <person name="Yu G."/>
            <person name="Yuan J."/>
            <person name="Zhang M."/>
            <person name="Zhang Z."/>
            <person name="Goddard A.D."/>
            <person name="Wood W.I."/>
            <person name="Godowski P.J."/>
            <person name="Gray A.M."/>
        </authorList>
    </citation>
    <scope>NUCLEOTIDE SEQUENCE [LARGE SCALE MRNA]</scope>
</reference>
<reference key="2">
    <citation type="journal article" date="2005" name="DNA Res.">
        <title>Signal sequence and keyword trap in silico for selection of full-length human cDNAs encoding secretion or membrane proteins from oligo-capped cDNA libraries.</title>
        <authorList>
            <person name="Otsuki T."/>
            <person name="Ota T."/>
            <person name="Nishikawa T."/>
            <person name="Hayashi K."/>
            <person name="Suzuki Y."/>
            <person name="Yamamoto J."/>
            <person name="Wakamatsu A."/>
            <person name="Kimura K."/>
            <person name="Sakamoto K."/>
            <person name="Hatano N."/>
            <person name="Kawai Y."/>
            <person name="Ishii S."/>
            <person name="Saito K."/>
            <person name="Kojima S."/>
            <person name="Sugiyama T."/>
            <person name="Ono T."/>
            <person name="Okano K."/>
            <person name="Yoshikawa Y."/>
            <person name="Aotsuka S."/>
            <person name="Sasaki N."/>
            <person name="Hattori A."/>
            <person name="Okumura K."/>
            <person name="Nagai K."/>
            <person name="Sugano S."/>
            <person name="Isogai T."/>
        </authorList>
    </citation>
    <scope>NUCLEOTIDE SEQUENCE [LARGE SCALE MRNA]</scope>
    <source>
        <tissue>Embryo</tissue>
    </source>
</reference>
<reference key="3">
    <citation type="journal article" date="2003" name="Science">
        <title>Human chromosome 7: DNA sequence and biology.</title>
        <authorList>
            <person name="Scherer S.W."/>
            <person name="Cheung J."/>
            <person name="MacDonald J.R."/>
            <person name="Osborne L.R."/>
            <person name="Nakabayashi K."/>
            <person name="Herbrick J.-A."/>
            <person name="Carson A.R."/>
            <person name="Parker-Katiraee L."/>
            <person name="Skaug J."/>
            <person name="Khaja R."/>
            <person name="Zhang J."/>
            <person name="Hudek A.K."/>
            <person name="Li M."/>
            <person name="Haddad M."/>
            <person name="Duggan G.E."/>
            <person name="Fernandez B.A."/>
            <person name="Kanematsu E."/>
            <person name="Gentles S."/>
            <person name="Christopoulos C.C."/>
            <person name="Choufani S."/>
            <person name="Kwasnicka D."/>
            <person name="Zheng X.H."/>
            <person name="Lai Z."/>
            <person name="Nusskern D.R."/>
            <person name="Zhang Q."/>
            <person name="Gu Z."/>
            <person name="Lu F."/>
            <person name="Zeesman S."/>
            <person name="Nowaczyk M.J."/>
            <person name="Teshima I."/>
            <person name="Chitayat D."/>
            <person name="Shuman C."/>
            <person name="Weksberg R."/>
            <person name="Zackai E.H."/>
            <person name="Grebe T.A."/>
            <person name="Cox S.R."/>
            <person name="Kirkpatrick S.J."/>
            <person name="Rahman N."/>
            <person name="Friedman J.M."/>
            <person name="Heng H.H.Q."/>
            <person name="Pelicci P.G."/>
            <person name="Lo-Coco F."/>
            <person name="Belloni E."/>
            <person name="Shaffer L.G."/>
            <person name="Pober B."/>
            <person name="Morton C.C."/>
            <person name="Gusella J.F."/>
            <person name="Bruns G.A.P."/>
            <person name="Korf B.R."/>
            <person name="Quade B.J."/>
            <person name="Ligon A.H."/>
            <person name="Ferguson H."/>
            <person name="Higgins A.W."/>
            <person name="Leach N.T."/>
            <person name="Herrick S.R."/>
            <person name="Lemyre E."/>
            <person name="Farra C.G."/>
            <person name="Kim H.-G."/>
            <person name="Summers A.M."/>
            <person name="Gripp K.W."/>
            <person name="Roberts W."/>
            <person name="Szatmari P."/>
            <person name="Winsor E.J.T."/>
            <person name="Grzeschik K.-H."/>
            <person name="Teebi A."/>
            <person name="Minassian B.A."/>
            <person name="Kere J."/>
            <person name="Armengol L."/>
            <person name="Pujana M.A."/>
            <person name="Estivill X."/>
            <person name="Wilson M.D."/>
            <person name="Koop B.F."/>
            <person name="Tosi S."/>
            <person name="Moore G.E."/>
            <person name="Boright A.P."/>
            <person name="Zlotorynski E."/>
            <person name="Kerem B."/>
            <person name="Kroisel P.M."/>
            <person name="Petek E."/>
            <person name="Oscier D.G."/>
            <person name="Mould S.J."/>
            <person name="Doehner H."/>
            <person name="Doehner K."/>
            <person name="Rommens J.M."/>
            <person name="Vincent J.B."/>
            <person name="Venter J.C."/>
            <person name="Li P.W."/>
            <person name="Mural R.J."/>
            <person name="Adams M.D."/>
            <person name="Tsui L.-C."/>
        </authorList>
    </citation>
    <scope>NUCLEOTIDE SEQUENCE [LARGE SCALE GENOMIC DNA]</scope>
</reference>
<reference key="4">
    <citation type="journal article" date="2004" name="Genome Res.">
        <title>The status, quality, and expansion of the NIH full-length cDNA project: the Mammalian Gene Collection (MGC).</title>
        <authorList>
            <consortium name="The MGC Project Team"/>
        </authorList>
    </citation>
    <scope>NUCLEOTIDE SEQUENCE [LARGE SCALE MRNA]</scope>
    <source>
        <tissue>Brain</tissue>
        <tissue>Placenta</tissue>
    </source>
</reference>
<reference key="5">
    <citation type="journal article" date="2006" name="Biochem. Biophys. Res. Commun.">
        <title>A molecule that is associated with Toll-like receptor 4 and regulates its cell surface expression.</title>
        <authorList>
            <person name="Konno K."/>
            <person name="Wakabayashi Y."/>
            <person name="Akashi-Takamura S."/>
            <person name="Ishii T."/>
            <person name="Kobayashi M."/>
            <person name="Takahashi K."/>
            <person name="Kusumoto Y."/>
            <person name="Saitoh S."/>
            <person name="Yoshizawa Y."/>
            <person name="Miyake K."/>
        </authorList>
    </citation>
    <scope>FUNCTION</scope>
</reference>